<name>BIOD_AERHH</name>
<comment type="function">
    <text evidence="1">Catalyzes a mechanistically unusual reaction, the ATP-dependent insertion of CO2 between the N7 and N8 nitrogen atoms of 7,8-diaminopelargonic acid (DAPA, also called 7,8-diammoniononanoate) to form a ureido ring.</text>
</comment>
<comment type="catalytic activity">
    <reaction evidence="1">
        <text>(7R,8S)-7,8-diammoniononanoate + CO2 + ATP = (4R,5S)-dethiobiotin + ADP + phosphate + 3 H(+)</text>
        <dbReference type="Rhea" id="RHEA:15805"/>
        <dbReference type="ChEBI" id="CHEBI:15378"/>
        <dbReference type="ChEBI" id="CHEBI:16526"/>
        <dbReference type="ChEBI" id="CHEBI:30616"/>
        <dbReference type="ChEBI" id="CHEBI:43474"/>
        <dbReference type="ChEBI" id="CHEBI:149469"/>
        <dbReference type="ChEBI" id="CHEBI:149473"/>
        <dbReference type="ChEBI" id="CHEBI:456216"/>
        <dbReference type="EC" id="6.3.3.3"/>
    </reaction>
</comment>
<comment type="cofactor">
    <cofactor evidence="1">
        <name>Mg(2+)</name>
        <dbReference type="ChEBI" id="CHEBI:18420"/>
    </cofactor>
</comment>
<comment type="pathway">
    <text evidence="1">Cofactor biosynthesis; biotin biosynthesis; biotin from 7,8-diaminononanoate: step 1/2.</text>
</comment>
<comment type="subunit">
    <text evidence="1">Homodimer.</text>
</comment>
<comment type="subcellular location">
    <subcellularLocation>
        <location evidence="1">Cytoplasm</location>
    </subcellularLocation>
</comment>
<comment type="similarity">
    <text evidence="1">Belongs to the dethiobiotin synthetase family.</text>
</comment>
<keyword id="KW-0067">ATP-binding</keyword>
<keyword id="KW-0093">Biotin biosynthesis</keyword>
<keyword id="KW-0963">Cytoplasm</keyword>
<keyword id="KW-0436">Ligase</keyword>
<keyword id="KW-0460">Magnesium</keyword>
<keyword id="KW-0479">Metal-binding</keyword>
<keyword id="KW-0547">Nucleotide-binding</keyword>
<keyword id="KW-1185">Reference proteome</keyword>
<accession>A0KIC9</accession>
<sequence length="226" mass="24448">MVKSFFVTGTDTDVGKTLVARTLLLEFAAHGLRCAGYKPISAGCARTPDGLRNLDAVLLQEAASLPLPYDLVNPYAYEPPIAPHIAASEARDAITLKGLSDGLRQIEQAGAELVVVEGAGGWFLPLDRKHLLSDWVKQENMPVIMVVGAKLGCLNHALLTFAAIRNNNLPVAGWVINRLHGSMSHYQENLDTLRGLLPAPFLGEIPFVNNPLEADLRGRLDISPLL</sequence>
<gene>
    <name evidence="1" type="primary">bioD</name>
    <name type="ordered locus">AHA_1492</name>
</gene>
<reference key="1">
    <citation type="journal article" date="2006" name="J. Bacteriol.">
        <title>Genome sequence of Aeromonas hydrophila ATCC 7966T: jack of all trades.</title>
        <authorList>
            <person name="Seshadri R."/>
            <person name="Joseph S.W."/>
            <person name="Chopra A.K."/>
            <person name="Sha J."/>
            <person name="Shaw J."/>
            <person name="Graf J."/>
            <person name="Haft D.H."/>
            <person name="Wu M."/>
            <person name="Ren Q."/>
            <person name="Rosovitz M.J."/>
            <person name="Madupu R."/>
            <person name="Tallon L."/>
            <person name="Kim M."/>
            <person name="Jin S."/>
            <person name="Vuong H."/>
            <person name="Stine O.C."/>
            <person name="Ali A."/>
            <person name="Horneman A.J."/>
            <person name="Heidelberg J.F."/>
        </authorList>
    </citation>
    <scope>NUCLEOTIDE SEQUENCE [LARGE SCALE GENOMIC DNA]</scope>
    <source>
        <strain>ATCC 7966 / DSM 30187 / BCRC 13018 / CCUG 14551 / JCM 1027 / KCTC 2358 / NCIMB 9240 / NCTC 8049</strain>
    </source>
</reference>
<organism>
    <name type="scientific">Aeromonas hydrophila subsp. hydrophila (strain ATCC 7966 / DSM 30187 / BCRC 13018 / CCUG 14551 / JCM 1027 / KCTC 2358 / NCIMB 9240 / NCTC 8049)</name>
    <dbReference type="NCBI Taxonomy" id="380703"/>
    <lineage>
        <taxon>Bacteria</taxon>
        <taxon>Pseudomonadati</taxon>
        <taxon>Pseudomonadota</taxon>
        <taxon>Gammaproteobacteria</taxon>
        <taxon>Aeromonadales</taxon>
        <taxon>Aeromonadaceae</taxon>
        <taxon>Aeromonas</taxon>
    </lineage>
</organism>
<proteinExistence type="inferred from homology"/>
<protein>
    <recommendedName>
        <fullName evidence="1">ATP-dependent dethiobiotin synthetase BioD</fullName>
        <ecNumber evidence="1">6.3.3.3</ecNumber>
    </recommendedName>
    <alternativeName>
        <fullName evidence="1">DTB synthetase</fullName>
        <shortName evidence="1">DTBS</shortName>
    </alternativeName>
    <alternativeName>
        <fullName evidence="1">Dethiobiotin synthase</fullName>
    </alternativeName>
</protein>
<evidence type="ECO:0000255" key="1">
    <source>
        <dbReference type="HAMAP-Rule" id="MF_00336"/>
    </source>
</evidence>
<feature type="chain" id="PRO_1000205208" description="ATP-dependent dethiobiotin synthetase BioD">
    <location>
        <begin position="1"/>
        <end position="226"/>
    </location>
</feature>
<feature type="active site" evidence="1">
    <location>
        <position position="38"/>
    </location>
</feature>
<feature type="binding site" evidence="1">
    <location>
        <begin position="13"/>
        <end position="18"/>
    </location>
    <ligand>
        <name>ATP</name>
        <dbReference type="ChEBI" id="CHEBI:30616"/>
    </ligand>
</feature>
<feature type="binding site" evidence="1">
    <location>
        <position position="17"/>
    </location>
    <ligand>
        <name>Mg(2+)</name>
        <dbReference type="ChEBI" id="CHEBI:18420"/>
    </ligand>
</feature>
<feature type="binding site" evidence="1">
    <location>
        <position position="55"/>
    </location>
    <ligand>
        <name>ATP</name>
        <dbReference type="ChEBI" id="CHEBI:30616"/>
    </ligand>
</feature>
<feature type="binding site" evidence="1">
    <location>
        <position position="55"/>
    </location>
    <ligand>
        <name>Mg(2+)</name>
        <dbReference type="ChEBI" id="CHEBI:18420"/>
    </ligand>
</feature>
<feature type="binding site" evidence="1">
    <location>
        <begin position="117"/>
        <end position="120"/>
    </location>
    <ligand>
        <name>ATP</name>
        <dbReference type="ChEBI" id="CHEBI:30616"/>
    </ligand>
</feature>
<feature type="binding site" evidence="1">
    <location>
        <position position="117"/>
    </location>
    <ligand>
        <name>Mg(2+)</name>
        <dbReference type="ChEBI" id="CHEBI:18420"/>
    </ligand>
</feature>
<feature type="binding site" evidence="1">
    <location>
        <begin position="177"/>
        <end position="178"/>
    </location>
    <ligand>
        <name>ATP</name>
        <dbReference type="ChEBI" id="CHEBI:30616"/>
    </ligand>
</feature>
<feature type="binding site" evidence="1">
    <location>
        <begin position="206"/>
        <end position="208"/>
    </location>
    <ligand>
        <name>ATP</name>
        <dbReference type="ChEBI" id="CHEBI:30616"/>
    </ligand>
</feature>
<feature type="binding site" evidence="1">
    <location>
        <position position="213"/>
    </location>
    <ligand>
        <name>ATP</name>
        <dbReference type="ChEBI" id="CHEBI:30616"/>
    </ligand>
</feature>
<dbReference type="EC" id="6.3.3.3" evidence="1"/>
<dbReference type="EMBL" id="CP000462">
    <property type="protein sequence ID" value="ABK38307.1"/>
    <property type="molecule type" value="Genomic_DNA"/>
</dbReference>
<dbReference type="RefSeq" id="WP_011705390.1">
    <property type="nucleotide sequence ID" value="NC_008570.1"/>
</dbReference>
<dbReference type="RefSeq" id="YP_856030.1">
    <property type="nucleotide sequence ID" value="NC_008570.1"/>
</dbReference>
<dbReference type="SMR" id="A0KIC9"/>
<dbReference type="STRING" id="380703.AHA_1492"/>
<dbReference type="EnsemblBacteria" id="ABK38307">
    <property type="protein sequence ID" value="ABK38307"/>
    <property type="gene ID" value="AHA_1492"/>
</dbReference>
<dbReference type="GeneID" id="4487693"/>
<dbReference type="KEGG" id="aha:AHA_1492"/>
<dbReference type="PATRIC" id="fig|380703.7.peg.1503"/>
<dbReference type="eggNOG" id="COG0132">
    <property type="taxonomic scope" value="Bacteria"/>
</dbReference>
<dbReference type="HOGENOM" id="CLU_072551_0_0_6"/>
<dbReference type="OrthoDB" id="9802097at2"/>
<dbReference type="UniPathway" id="UPA00078">
    <property type="reaction ID" value="UER00161"/>
</dbReference>
<dbReference type="Proteomes" id="UP000000756">
    <property type="component" value="Chromosome"/>
</dbReference>
<dbReference type="GO" id="GO:0005829">
    <property type="term" value="C:cytosol"/>
    <property type="evidence" value="ECO:0007669"/>
    <property type="project" value="TreeGrafter"/>
</dbReference>
<dbReference type="GO" id="GO:0005524">
    <property type="term" value="F:ATP binding"/>
    <property type="evidence" value="ECO:0007669"/>
    <property type="project" value="UniProtKB-UniRule"/>
</dbReference>
<dbReference type="GO" id="GO:0004141">
    <property type="term" value="F:dethiobiotin synthase activity"/>
    <property type="evidence" value="ECO:0007669"/>
    <property type="project" value="UniProtKB-UniRule"/>
</dbReference>
<dbReference type="GO" id="GO:0000287">
    <property type="term" value="F:magnesium ion binding"/>
    <property type="evidence" value="ECO:0007669"/>
    <property type="project" value="UniProtKB-UniRule"/>
</dbReference>
<dbReference type="GO" id="GO:0009102">
    <property type="term" value="P:biotin biosynthetic process"/>
    <property type="evidence" value="ECO:0007669"/>
    <property type="project" value="UniProtKB-UniRule"/>
</dbReference>
<dbReference type="CDD" id="cd03109">
    <property type="entry name" value="DTBS"/>
    <property type="match status" value="1"/>
</dbReference>
<dbReference type="FunFam" id="3.40.50.300:FF:000292">
    <property type="entry name" value="ATP-dependent dethiobiotin synthetase BioD"/>
    <property type="match status" value="1"/>
</dbReference>
<dbReference type="Gene3D" id="3.40.50.300">
    <property type="entry name" value="P-loop containing nucleotide triphosphate hydrolases"/>
    <property type="match status" value="1"/>
</dbReference>
<dbReference type="HAMAP" id="MF_00336">
    <property type="entry name" value="BioD"/>
    <property type="match status" value="1"/>
</dbReference>
<dbReference type="InterPro" id="IPR004472">
    <property type="entry name" value="DTB_synth_BioD"/>
</dbReference>
<dbReference type="InterPro" id="IPR027417">
    <property type="entry name" value="P-loop_NTPase"/>
</dbReference>
<dbReference type="NCBIfam" id="TIGR00347">
    <property type="entry name" value="bioD"/>
    <property type="match status" value="1"/>
</dbReference>
<dbReference type="PANTHER" id="PTHR43210">
    <property type="entry name" value="DETHIOBIOTIN SYNTHETASE"/>
    <property type="match status" value="1"/>
</dbReference>
<dbReference type="PANTHER" id="PTHR43210:SF5">
    <property type="entry name" value="DETHIOBIOTIN SYNTHETASE"/>
    <property type="match status" value="1"/>
</dbReference>
<dbReference type="Pfam" id="PF13500">
    <property type="entry name" value="AAA_26"/>
    <property type="match status" value="1"/>
</dbReference>
<dbReference type="PIRSF" id="PIRSF006755">
    <property type="entry name" value="DTB_synth"/>
    <property type="match status" value="1"/>
</dbReference>
<dbReference type="SUPFAM" id="SSF52540">
    <property type="entry name" value="P-loop containing nucleoside triphosphate hydrolases"/>
    <property type="match status" value="1"/>
</dbReference>